<evidence type="ECO:0000250" key="1"/>
<evidence type="ECO:0000250" key="2">
    <source>
        <dbReference type="UniProtKB" id="O00159"/>
    </source>
</evidence>
<evidence type="ECO:0000250" key="3">
    <source>
        <dbReference type="UniProtKB" id="Q9WTI7"/>
    </source>
</evidence>
<evidence type="ECO:0000255" key="4">
    <source>
        <dbReference type="PROSITE-ProRule" id="PRU00116"/>
    </source>
</evidence>
<evidence type="ECO:0000255" key="5">
    <source>
        <dbReference type="PROSITE-ProRule" id="PRU00782"/>
    </source>
</evidence>
<evidence type="ECO:0000255" key="6">
    <source>
        <dbReference type="PROSITE-ProRule" id="PRU01093"/>
    </source>
</evidence>
<evidence type="ECO:0000269" key="7">
    <source>
    </source>
</evidence>
<evidence type="ECO:0000269" key="8">
    <source ref="1"/>
</evidence>
<evidence type="ECO:0000305" key="9"/>
<dbReference type="EMBL" id="U14382">
    <property type="protein sequence ID" value="AAA65091.1"/>
    <property type="molecule type" value="mRNA"/>
</dbReference>
<dbReference type="EMBL" id="U14549">
    <property type="protein sequence ID" value="AAA57192.1"/>
    <property type="molecule type" value="mRNA"/>
</dbReference>
<dbReference type="PIR" id="I51173">
    <property type="entry name" value="I51173"/>
</dbReference>
<dbReference type="SMR" id="Q92002"/>
<dbReference type="GO" id="GO:0031410">
    <property type="term" value="C:cytoplasmic vesicle"/>
    <property type="evidence" value="ECO:0007669"/>
    <property type="project" value="UniProtKB-KW"/>
</dbReference>
<dbReference type="GO" id="GO:0005902">
    <property type="term" value="C:microvillus"/>
    <property type="evidence" value="ECO:0007669"/>
    <property type="project" value="TreeGrafter"/>
</dbReference>
<dbReference type="GO" id="GO:0016459">
    <property type="term" value="C:myosin complex"/>
    <property type="evidence" value="ECO:0007669"/>
    <property type="project" value="UniProtKB-KW"/>
</dbReference>
<dbReference type="GO" id="GO:0032587">
    <property type="term" value="C:ruffle membrane"/>
    <property type="evidence" value="ECO:0007669"/>
    <property type="project" value="UniProtKB-SubCell"/>
</dbReference>
<dbReference type="GO" id="GO:0060171">
    <property type="term" value="C:stereocilium membrane"/>
    <property type="evidence" value="ECO:0007669"/>
    <property type="project" value="UniProtKB-SubCell"/>
</dbReference>
<dbReference type="GO" id="GO:0051015">
    <property type="term" value="F:actin filament binding"/>
    <property type="evidence" value="ECO:0007669"/>
    <property type="project" value="TreeGrafter"/>
</dbReference>
<dbReference type="GO" id="GO:0005524">
    <property type="term" value="F:ATP binding"/>
    <property type="evidence" value="ECO:0007669"/>
    <property type="project" value="UniProtKB-KW"/>
</dbReference>
<dbReference type="GO" id="GO:0000146">
    <property type="term" value="F:microfilament motor activity"/>
    <property type="evidence" value="ECO:0007669"/>
    <property type="project" value="TreeGrafter"/>
</dbReference>
<dbReference type="GO" id="GO:0007015">
    <property type="term" value="P:actin filament organization"/>
    <property type="evidence" value="ECO:0007669"/>
    <property type="project" value="TreeGrafter"/>
</dbReference>
<dbReference type="GO" id="GO:0030048">
    <property type="term" value="P:actin filament-based movement"/>
    <property type="evidence" value="ECO:0007669"/>
    <property type="project" value="TreeGrafter"/>
</dbReference>
<dbReference type="GO" id="GO:0006897">
    <property type="term" value="P:endocytosis"/>
    <property type="evidence" value="ECO:0007669"/>
    <property type="project" value="TreeGrafter"/>
</dbReference>
<dbReference type="CDD" id="cd23766">
    <property type="entry name" value="IQCG"/>
    <property type="match status" value="1"/>
</dbReference>
<dbReference type="CDD" id="cd01378">
    <property type="entry name" value="MYSc_Myo1"/>
    <property type="match status" value="1"/>
</dbReference>
<dbReference type="FunFam" id="1.10.10.820:FF:000001">
    <property type="entry name" value="Myosin heavy chain"/>
    <property type="match status" value="1"/>
</dbReference>
<dbReference type="FunFam" id="3.40.850.10:FF:000101">
    <property type="entry name" value="Slow myosin heavy chain 2"/>
    <property type="match status" value="1"/>
</dbReference>
<dbReference type="FunFam" id="1.20.58.530:FF:000004">
    <property type="entry name" value="Unconventional myosin ID"/>
    <property type="match status" value="1"/>
</dbReference>
<dbReference type="FunFam" id="1.20.120.720:FF:000013">
    <property type="entry name" value="unconventional myosin-Ic isoform X2"/>
    <property type="match status" value="1"/>
</dbReference>
<dbReference type="Gene3D" id="1.10.10.820">
    <property type="match status" value="1"/>
</dbReference>
<dbReference type="Gene3D" id="1.20.5.190">
    <property type="match status" value="1"/>
</dbReference>
<dbReference type="Gene3D" id="1.20.58.530">
    <property type="match status" value="1"/>
</dbReference>
<dbReference type="Gene3D" id="6.20.240.20">
    <property type="match status" value="1"/>
</dbReference>
<dbReference type="Gene3D" id="3.40.850.10">
    <property type="entry name" value="Kinesin motor domain"/>
    <property type="match status" value="1"/>
</dbReference>
<dbReference type="Gene3D" id="1.20.120.720">
    <property type="entry name" value="Myosin VI head, motor domain, U50 subdomain"/>
    <property type="match status" value="1"/>
</dbReference>
<dbReference type="InterPro" id="IPR000048">
    <property type="entry name" value="IQ_motif_EF-hand-BS"/>
</dbReference>
<dbReference type="InterPro" id="IPR036961">
    <property type="entry name" value="Kinesin_motor_dom_sf"/>
</dbReference>
<dbReference type="InterPro" id="IPR001609">
    <property type="entry name" value="Myosin_head_motor_dom-like"/>
</dbReference>
<dbReference type="InterPro" id="IPR010926">
    <property type="entry name" value="Myosin_TH1"/>
</dbReference>
<dbReference type="InterPro" id="IPR036072">
    <property type="entry name" value="MYSc_Myo1"/>
</dbReference>
<dbReference type="InterPro" id="IPR027417">
    <property type="entry name" value="P-loop_NTPase"/>
</dbReference>
<dbReference type="PANTHER" id="PTHR13140">
    <property type="entry name" value="MYOSIN"/>
    <property type="match status" value="1"/>
</dbReference>
<dbReference type="PANTHER" id="PTHR13140:SF255">
    <property type="entry name" value="UNCONVENTIONAL MYOSIN-IC"/>
    <property type="match status" value="1"/>
</dbReference>
<dbReference type="Pfam" id="PF00612">
    <property type="entry name" value="IQ"/>
    <property type="match status" value="2"/>
</dbReference>
<dbReference type="Pfam" id="PF00063">
    <property type="entry name" value="Myosin_head"/>
    <property type="match status" value="1"/>
</dbReference>
<dbReference type="Pfam" id="PF06017">
    <property type="entry name" value="Myosin_TH1"/>
    <property type="match status" value="1"/>
</dbReference>
<dbReference type="PRINTS" id="PR00193">
    <property type="entry name" value="MYOSINHEAVY"/>
</dbReference>
<dbReference type="SMART" id="SM00015">
    <property type="entry name" value="IQ"/>
    <property type="match status" value="2"/>
</dbReference>
<dbReference type="SMART" id="SM00242">
    <property type="entry name" value="MYSc"/>
    <property type="match status" value="1"/>
</dbReference>
<dbReference type="SUPFAM" id="SSF52540">
    <property type="entry name" value="P-loop containing nucleoside triphosphate hydrolases"/>
    <property type="match status" value="1"/>
</dbReference>
<dbReference type="PROSITE" id="PS50096">
    <property type="entry name" value="IQ"/>
    <property type="match status" value="2"/>
</dbReference>
<dbReference type="PROSITE" id="PS51456">
    <property type="entry name" value="MYOSIN_MOTOR"/>
    <property type="match status" value="1"/>
</dbReference>
<dbReference type="PROSITE" id="PS51757">
    <property type="entry name" value="TH1"/>
    <property type="match status" value="1"/>
</dbReference>
<comment type="function">
    <text evidence="3">Myosins are actin-based motor molecules with ATPase activity. Unconventional myosins serve in intracellular movements. Their highly divergent tails are presumed to bind to membranous compartments, which would be moved relative to actin filaments (By similarity).</text>
</comment>
<comment type="subunit">
    <text evidence="2">Interacts (via its IQ motifs) with calmodulin.</text>
</comment>
<comment type="subcellular location">
    <subcellularLocation>
        <location evidence="7">Cytoplasm</location>
    </subcellularLocation>
    <subcellularLocation>
        <location evidence="7">Cell membrane</location>
        <topology evidence="7">Peripheral membrane protein</topology>
        <orientation evidence="7">Cytoplasmic side</orientation>
    </subcellularLocation>
    <subcellularLocation>
        <location evidence="3">Cell projection</location>
        <location evidence="3">Ruffle membrane</location>
    </subcellularLocation>
    <subcellularLocation>
        <location evidence="3">Cytoplasmic vesicle</location>
    </subcellularLocation>
    <subcellularLocation>
        <location evidence="7">Cell projection</location>
        <location evidence="7">Stereocilium membrane</location>
    </subcellularLocation>
    <text evidence="7">Detected in stereocilia at the insertions of stereocilia into the apical surface of the cell, near the side plaques of tip links and near the tops of the tip links.</text>
</comment>
<comment type="tissue specificity">
    <text evidence="8">Expressed in brain and the sacculus of the internal ear.</text>
</comment>
<comment type="similarity">
    <text evidence="9">Belongs to the TRAFAC class myosin-kinesin ATPase superfamily. Myosin family.</text>
</comment>
<comment type="caution">
    <text evidence="9">Represents an unconventional myosin. This protein should not be confused with the conventional myosin-1 (MYH1).</text>
</comment>
<reference key="1">
    <citation type="journal article" date="1994" name="Aud. Neurosci.">
        <title>Molecular cloning of myosins from the bullfrog saccular macula: A candidate for the hair-cell adaptation motor.</title>
        <authorList>
            <person name="Solc C.F."/>
            <person name="Derfler B.H."/>
            <person name="Duyk G.M."/>
            <person name="Corey D.P."/>
        </authorList>
    </citation>
    <scope>NUCLEOTIDE SEQUENCE [MRNA]</scope>
    <scope>TISSUE SPECIFICITY</scope>
    <source>
        <tissue>Kidney</tissue>
    </source>
</reference>
<reference key="2">
    <citation type="journal article" date="1994" name="Proc. Natl. Acad. Sci. U.S.A.">
        <title>Molecular cloning of a myosin I beta isozyme that may mediate adaptation by hair cells of the bullfrog's internal ear.</title>
        <authorList>
            <person name="Metcalf A.B."/>
            <person name="Chelliah Y."/>
            <person name="Hudspeth A.J."/>
        </authorList>
    </citation>
    <scope>NUCLEOTIDE SEQUENCE [MRNA]</scope>
    <source>
        <tissue>Brain</tissue>
    </source>
</reference>
<reference key="3">
    <citation type="journal article" date="1998" name="J. Neurosci.">
        <title>Localization of myosin-Ibeta near both ends of tip links in frog saccular hair cells.</title>
        <authorList>
            <person name="Garcia J.A."/>
            <person name="Yee A.G."/>
            <person name="Gillespie P.G."/>
            <person name="Corey D.P."/>
        </authorList>
    </citation>
    <scope>SUBCELLULAR LOCATION</scope>
</reference>
<gene>
    <name type="primary">Myo1c</name>
</gene>
<organism>
    <name type="scientific">Aquarana catesbeiana</name>
    <name type="common">American bullfrog</name>
    <name type="synonym">Rana catesbeiana</name>
    <dbReference type="NCBI Taxonomy" id="8400"/>
    <lineage>
        <taxon>Eukaryota</taxon>
        <taxon>Metazoa</taxon>
        <taxon>Chordata</taxon>
        <taxon>Craniata</taxon>
        <taxon>Vertebrata</taxon>
        <taxon>Euteleostomi</taxon>
        <taxon>Amphibia</taxon>
        <taxon>Batrachia</taxon>
        <taxon>Anura</taxon>
        <taxon>Neobatrachia</taxon>
        <taxon>Ranoidea</taxon>
        <taxon>Ranidae</taxon>
        <taxon>Aquarana</taxon>
    </lineage>
</organism>
<name>MYO1C_AQUCT</name>
<sequence length="1028" mass="118831">MESALTARDRVGVQDFVLLENYTSEAAFIENLRKRFKENLIYTYIGSVLVSVNPYKELEIYSKQHMERYRGVSFYEVSPHIYAIADNSYRSLRTERKDQCILISGESGAGKTEASKKILQYYAVTCPVSDQVETVKDRLLQSNPVLEAFGNAKTLRNDNSSRFGKYMDVQFDYKGAPVGGHILNYLLEKSRVVHQNHGERNFHIFYQLLEGGEEDLLRRLGLDKNAQNYQYLIKGQCARVSSINDKNDWKVVRRALSIINFNDDDIEELLSIVASVLHLGNVQFATDEHGHAQVTTENQIKYLARLLSVDSTVLRESLIHKKIIAKGEELNSPLNLEQAAYARDALAKAIYGRTFSWLVSKINKSLAYKGTDMHKLGSASVIGLLDIYGFEVFQHNSFEQFCINFCNEKLQQLFIELTLKSEQDEYESEGIAWEPVQYFNNKIICDLVEEKFKGIISILDEECLRPGEATDMTFLEKLEDTVKNHPHFVTHKLGDQKTRKVLGRDEFRLLHYAGEVNYSVAGFLDKNNDLLFRNLKEVMCDSGNPIAHQCFNRSELTDKKRPETAATQFKNSLSKLMEILMSKQPSYVRCIKPNDAKQPARFDEVLIRHQVKYLGLIENVRVRRAGFAYRRKYEIFLQRYKSLCPDTWPNWDGRAMDGVAVLVKSLGYKPEEYKMGRTKIFIRFPKTLFATEDALEVRKHSIATFLQARWRGYHQRQKFLHMKHSAVEIQSWWRGTIGRRKAAKRKWAVDVVRRFIKGFIYRNQPRCTENEYFLDYIRYSFLMTLYRNQPKSVLDKSWPVPPPSLREASELLREMCMNNMVWKYCRRINPEWKQQLEQKVVASEIFKDKKDNYPQSVPRLFINTRLGNDEINTKILQQLESQTLTYAVPVVKYDRKGYKPRRRQLLLTQNAAYLVEEAKMKQRIDYANLTGISVSSLSDNLFVLHVKCEDNKQKGDAILQSDHVIETLTKVAITAEKINNININQGSIKFTVGPGKEGIIDFTAGSELLIAKAKNGHLSVVAPRLNSR</sequence>
<protein>
    <recommendedName>
        <fullName>Unconventional myosin-Ic</fullName>
    </recommendedName>
    <alternativeName>
        <fullName>Myosin I beta</fullName>
        <shortName>MMI-beta</shortName>
        <shortName>MMIb</shortName>
        <shortName>aMIb</shortName>
    </alternativeName>
</protein>
<proteinExistence type="evidence at transcript level"/>
<accession>Q92002</accession>
<feature type="chain" id="PRO_0000369412" description="Unconventional myosin-Ic">
    <location>
        <begin position="1"/>
        <end position="1028"/>
    </location>
</feature>
<feature type="domain" description="Myosin motor" evidence="5">
    <location>
        <begin position="12"/>
        <end position="696"/>
    </location>
</feature>
<feature type="domain" description="IQ 1" evidence="4">
    <location>
        <begin position="699"/>
        <end position="728"/>
    </location>
</feature>
<feature type="domain" description="IQ 2" evidence="4">
    <location>
        <begin position="722"/>
        <end position="751"/>
    </location>
</feature>
<feature type="domain" description="TH1" evidence="6">
    <location>
        <begin position="850"/>
        <end position="1024"/>
    </location>
</feature>
<feature type="region of interest" description="Actin-binding" evidence="5">
    <location>
        <begin position="573"/>
        <end position="595"/>
    </location>
</feature>
<feature type="binding site" evidence="1">
    <location>
        <position position="53"/>
    </location>
    <ligand>
        <name>ATP</name>
        <dbReference type="ChEBI" id="CHEBI:30616"/>
    </ligand>
</feature>
<feature type="binding site" evidence="1">
    <location>
        <position position="61"/>
    </location>
    <ligand>
        <name>ATP</name>
        <dbReference type="ChEBI" id="CHEBI:30616"/>
    </ligand>
</feature>
<feature type="binding site" evidence="1">
    <location>
        <begin position="104"/>
        <end position="113"/>
    </location>
    <ligand>
        <name>ATP</name>
        <dbReference type="ChEBI" id="CHEBI:30616"/>
    </ligand>
</feature>
<feature type="binding site" evidence="1">
    <location>
        <begin position="157"/>
        <end position="161"/>
    </location>
    <ligand>
        <name>ATP</name>
        <dbReference type="ChEBI" id="CHEBI:30616"/>
    </ligand>
</feature>
<feature type="modified residue" description="N-acetylmethionine" evidence="1">
    <location>
        <position position="1"/>
    </location>
</feature>
<feature type="modified residue" description="N6-methyllysine" evidence="1">
    <location>
        <position position="348"/>
    </location>
</feature>
<keyword id="KW-0007">Acetylation</keyword>
<keyword id="KW-0009">Actin-binding</keyword>
<keyword id="KW-0067">ATP-binding</keyword>
<keyword id="KW-1003">Cell membrane</keyword>
<keyword id="KW-0966">Cell projection</keyword>
<keyword id="KW-0963">Cytoplasm</keyword>
<keyword id="KW-0968">Cytoplasmic vesicle</keyword>
<keyword id="KW-0472">Membrane</keyword>
<keyword id="KW-0488">Methylation</keyword>
<keyword id="KW-0505">Motor protein</keyword>
<keyword id="KW-0518">Myosin</keyword>
<keyword id="KW-0547">Nucleotide-binding</keyword>
<keyword id="KW-0677">Repeat</keyword>